<accession>B5RUN4</accession>
<comment type="function">
    <text evidence="1">Mitochondrial GTPase that mediates the disassembly of ribosomes from messenger RNA at the termination of mitochondrial protein biosynthesis. Not involved in the GTP-dependent ribosomal translocation step during translation elongation.</text>
</comment>
<comment type="subcellular location">
    <subcellularLocation>
        <location evidence="1">Mitochondrion</location>
    </subcellularLocation>
</comment>
<comment type="miscellaneous">
    <text evidence="1">This protein may be expected to contain an N-terminal transit peptide but none has been predicted.</text>
</comment>
<comment type="similarity">
    <text evidence="1">Belongs to the TRAFAC class translation factor GTPase superfamily. Classic translation factor GTPase family. EF-G/EF-2 subfamily.</text>
</comment>
<keyword id="KW-0342">GTP-binding</keyword>
<keyword id="KW-0496">Mitochondrion</keyword>
<keyword id="KW-0547">Nucleotide-binding</keyword>
<keyword id="KW-0648">Protein biosynthesis</keyword>
<keyword id="KW-1185">Reference proteome</keyword>
<evidence type="ECO:0000255" key="1">
    <source>
        <dbReference type="HAMAP-Rule" id="MF_03059"/>
    </source>
</evidence>
<protein>
    <recommendedName>
        <fullName evidence="1">Ribosome-releasing factor 2, mitochondrial</fullName>
        <shortName evidence="1">RRF2mt</shortName>
    </recommendedName>
    <alternativeName>
        <fullName evidence="1">Elongation factor G 2, mitochondrial</fullName>
        <shortName evidence="1">EF-G2mt</shortName>
        <shortName evidence="1">mEF-G 2</shortName>
    </alternativeName>
</protein>
<gene>
    <name evidence="1" type="primary">MEF2</name>
    <name type="ordered locus">DEHA2F24662g</name>
</gene>
<name>RRF2M_DEBHA</name>
<feature type="chain" id="PRO_0000385614" description="Ribosome-releasing factor 2, mitochondrial">
    <location>
        <begin position="1"/>
        <end position="860"/>
    </location>
</feature>
<feature type="domain" description="tr-type G">
    <location>
        <begin position="45"/>
        <end position="337"/>
    </location>
</feature>
<feature type="binding site" evidence="1">
    <location>
        <begin position="54"/>
        <end position="61"/>
    </location>
    <ligand>
        <name>GTP</name>
        <dbReference type="ChEBI" id="CHEBI:37565"/>
    </ligand>
</feature>
<feature type="binding site" evidence="1">
    <location>
        <begin position="118"/>
        <end position="122"/>
    </location>
    <ligand>
        <name>GTP</name>
        <dbReference type="ChEBI" id="CHEBI:37565"/>
    </ligand>
</feature>
<feature type="binding site" evidence="1">
    <location>
        <begin position="172"/>
        <end position="175"/>
    </location>
    <ligand>
        <name>GTP</name>
        <dbReference type="ChEBI" id="CHEBI:37565"/>
    </ligand>
</feature>
<reference key="1">
    <citation type="journal article" date="2004" name="Nature">
        <title>Genome evolution in yeasts.</title>
        <authorList>
            <person name="Dujon B."/>
            <person name="Sherman D."/>
            <person name="Fischer G."/>
            <person name="Durrens P."/>
            <person name="Casaregola S."/>
            <person name="Lafontaine I."/>
            <person name="de Montigny J."/>
            <person name="Marck C."/>
            <person name="Neuveglise C."/>
            <person name="Talla E."/>
            <person name="Goffard N."/>
            <person name="Frangeul L."/>
            <person name="Aigle M."/>
            <person name="Anthouard V."/>
            <person name="Babour A."/>
            <person name="Barbe V."/>
            <person name="Barnay S."/>
            <person name="Blanchin S."/>
            <person name="Beckerich J.-M."/>
            <person name="Beyne E."/>
            <person name="Bleykasten C."/>
            <person name="Boisrame A."/>
            <person name="Boyer J."/>
            <person name="Cattolico L."/>
            <person name="Confanioleri F."/>
            <person name="de Daruvar A."/>
            <person name="Despons L."/>
            <person name="Fabre E."/>
            <person name="Fairhead C."/>
            <person name="Ferry-Dumazet H."/>
            <person name="Groppi A."/>
            <person name="Hantraye F."/>
            <person name="Hennequin C."/>
            <person name="Jauniaux N."/>
            <person name="Joyet P."/>
            <person name="Kachouri R."/>
            <person name="Kerrest A."/>
            <person name="Koszul R."/>
            <person name="Lemaire M."/>
            <person name="Lesur I."/>
            <person name="Ma L."/>
            <person name="Muller H."/>
            <person name="Nicaud J.-M."/>
            <person name="Nikolski M."/>
            <person name="Oztas S."/>
            <person name="Ozier-Kalogeropoulos O."/>
            <person name="Pellenz S."/>
            <person name="Potier S."/>
            <person name="Richard G.-F."/>
            <person name="Straub M.-L."/>
            <person name="Suleau A."/>
            <person name="Swennen D."/>
            <person name="Tekaia F."/>
            <person name="Wesolowski-Louvel M."/>
            <person name="Westhof E."/>
            <person name="Wirth B."/>
            <person name="Zeniou-Meyer M."/>
            <person name="Zivanovic Y."/>
            <person name="Bolotin-Fukuhara M."/>
            <person name="Thierry A."/>
            <person name="Bouchier C."/>
            <person name="Caudron B."/>
            <person name="Scarpelli C."/>
            <person name="Gaillardin C."/>
            <person name="Weissenbach J."/>
            <person name="Wincker P."/>
            <person name="Souciet J.-L."/>
        </authorList>
    </citation>
    <scope>NUCLEOTIDE SEQUENCE [LARGE SCALE GENOMIC DNA]</scope>
    <source>
        <strain>ATCC 36239 / CBS 767 / BCRC 21394 / JCM 1990 / NBRC 0083 / IGC 2968</strain>
    </source>
</reference>
<organism>
    <name type="scientific">Debaryomyces hansenii (strain ATCC 36239 / CBS 767 / BCRC 21394 / JCM 1990 / NBRC 0083 / IGC 2968)</name>
    <name type="common">Yeast</name>
    <name type="synonym">Torulaspora hansenii</name>
    <dbReference type="NCBI Taxonomy" id="284592"/>
    <lineage>
        <taxon>Eukaryota</taxon>
        <taxon>Fungi</taxon>
        <taxon>Dikarya</taxon>
        <taxon>Ascomycota</taxon>
        <taxon>Saccharomycotina</taxon>
        <taxon>Pichiomycetes</taxon>
        <taxon>Debaryomycetaceae</taxon>
        <taxon>Debaryomyces</taxon>
    </lineage>
</organism>
<proteinExistence type="inferred from homology"/>
<sequence length="860" mass="95795">MTNTGPIVRRVFRYASVLDTICYKRGIHSSRALLSESRLNSVPPDRTRNIGIIAHIDAGKTTTTERMLFYSGKTRRIGNVDEGDTVTDYLPSERERGITIQSAAITIPWNKNKINIIDTPGHADFTFEVTRSLRVLDSCVTILDAVAGVEAQTEKVWKQAQALGIPKIAYVNKMDRDGAGFSRTVKEIIQKLQTRVVLCNIPYWETPVNDVPIFKGVLDVLNKKLLKWNSDSNANGTDISVTDLEKEMDKYPELYEMVSKSRESMVETLGEFDETIIDSFLENDEDYMKIPVAVLNSAIKRGTLANYVTPVFCGSSFRNIGVQPLMDAVVNFLPSPLETKVPDISSNAPKALAKMKGKNRKKKVTSEPTDVPLSMDPKHGLVINKNPNLTTALAFKVITHPTRGVMTFFRVYSGKLTSNTTIMNTRTGKKLNLRKLLLMHGDEPEVVPSISAGNIGVISGTDDDIVTGDTIVSHGPVNKPFNDLESSLKMLPIEIPPPLFNSSIEPLTAGDTRHLNSCIQILLREDPSLKVSVDEDLGQIILSGMGELHLEIIKERLVTDMKANARLRDVAVSYKETLGKPNYKSVTQSTGDNGCVSIEISMDSFEGLAEESSFADEDGAIVLEHENNIVILEPSATPEYMQTAIDERRWKSDHSLEDLQESLVHGCITALQLGGPVFGFALHSTVIRIKNWHFPVDSKDYNSSSLLDISRRAVTKNIKDLGESEKDLFSLLEPIMQTKVYINSDSLGEVVHDLTHRCQATITSIDDESENMDALNWANEESERVYVPPDYTMKNTNNLQVELRNKKVIVAETPLREMIGYLSRLRSITQGRGVFDMSYLGMKRVIKSRLASISNEFNFM</sequence>
<dbReference type="EMBL" id="CR382138">
    <property type="protein sequence ID" value="CAR66412.1"/>
    <property type="molecule type" value="Genomic_DNA"/>
</dbReference>
<dbReference type="RefSeq" id="XP_002770895.1">
    <property type="nucleotide sequence ID" value="XM_002770849.1"/>
</dbReference>
<dbReference type="SMR" id="B5RUN4"/>
<dbReference type="FunCoup" id="B5RUN4">
    <property type="interactions" value="629"/>
</dbReference>
<dbReference type="STRING" id="284592.B5RUN4"/>
<dbReference type="GeneID" id="8999064"/>
<dbReference type="KEGG" id="dha:DEHA2F24662g"/>
<dbReference type="VEuPathDB" id="FungiDB:DEHA2F24662g"/>
<dbReference type="eggNOG" id="KOG0465">
    <property type="taxonomic scope" value="Eukaryota"/>
</dbReference>
<dbReference type="HOGENOM" id="CLU_002794_4_1_1"/>
<dbReference type="InParanoid" id="B5RUN4"/>
<dbReference type="OMA" id="GPQFTFP"/>
<dbReference type="OrthoDB" id="198619at2759"/>
<dbReference type="Proteomes" id="UP000000599">
    <property type="component" value="Chromosome F"/>
</dbReference>
<dbReference type="GO" id="GO:0005739">
    <property type="term" value="C:mitochondrion"/>
    <property type="evidence" value="ECO:0007669"/>
    <property type="project" value="UniProtKB-SubCell"/>
</dbReference>
<dbReference type="GO" id="GO:0005525">
    <property type="term" value="F:GTP binding"/>
    <property type="evidence" value="ECO:0007669"/>
    <property type="project" value="UniProtKB-UniRule"/>
</dbReference>
<dbReference type="GO" id="GO:0003924">
    <property type="term" value="F:GTPase activity"/>
    <property type="evidence" value="ECO:0007669"/>
    <property type="project" value="UniProtKB-UniRule"/>
</dbReference>
<dbReference type="GO" id="GO:0000002">
    <property type="term" value="P:mitochondrial genome maintenance"/>
    <property type="evidence" value="ECO:0007669"/>
    <property type="project" value="EnsemblFungi"/>
</dbReference>
<dbReference type="GO" id="GO:0032543">
    <property type="term" value="P:mitochondrial translation"/>
    <property type="evidence" value="ECO:0007669"/>
    <property type="project" value="UniProtKB-UniRule"/>
</dbReference>
<dbReference type="GO" id="GO:0051881">
    <property type="term" value="P:regulation of mitochondrial membrane potential"/>
    <property type="evidence" value="ECO:0007669"/>
    <property type="project" value="EnsemblFungi"/>
</dbReference>
<dbReference type="GO" id="GO:0032790">
    <property type="term" value="P:ribosome disassembly"/>
    <property type="evidence" value="ECO:0007669"/>
    <property type="project" value="UniProtKB-UniRule"/>
</dbReference>
<dbReference type="CDD" id="cd01886">
    <property type="entry name" value="EF-G"/>
    <property type="match status" value="1"/>
</dbReference>
<dbReference type="CDD" id="cd16262">
    <property type="entry name" value="EFG_III"/>
    <property type="match status" value="1"/>
</dbReference>
<dbReference type="CDD" id="cd03713">
    <property type="entry name" value="EFG_mtEFG_C"/>
    <property type="match status" value="1"/>
</dbReference>
<dbReference type="FunFam" id="3.40.50.300:FF:001636">
    <property type="entry name" value="Ribosome-releasing factor 2, mitochondrial"/>
    <property type="match status" value="1"/>
</dbReference>
<dbReference type="Gene3D" id="3.30.70.240">
    <property type="match status" value="1"/>
</dbReference>
<dbReference type="Gene3D" id="3.30.70.870">
    <property type="entry name" value="Elongation Factor G (Translational Gtpase), domain 3"/>
    <property type="match status" value="1"/>
</dbReference>
<dbReference type="Gene3D" id="3.40.50.300">
    <property type="entry name" value="P-loop containing nucleotide triphosphate hydrolases"/>
    <property type="match status" value="1"/>
</dbReference>
<dbReference type="Gene3D" id="2.40.30.10">
    <property type="entry name" value="Translation factors"/>
    <property type="match status" value="1"/>
</dbReference>
<dbReference type="HAMAP" id="MF_03059">
    <property type="entry name" value="mEF_G_2"/>
    <property type="match status" value="1"/>
</dbReference>
<dbReference type="InterPro" id="IPR030851">
    <property type="entry name" value="EFG2"/>
</dbReference>
<dbReference type="InterPro" id="IPR041095">
    <property type="entry name" value="EFG_II"/>
</dbReference>
<dbReference type="InterPro" id="IPR009022">
    <property type="entry name" value="EFG_III"/>
</dbReference>
<dbReference type="InterPro" id="IPR035647">
    <property type="entry name" value="EFG_III/V"/>
</dbReference>
<dbReference type="InterPro" id="IPR035649">
    <property type="entry name" value="EFG_V"/>
</dbReference>
<dbReference type="InterPro" id="IPR000640">
    <property type="entry name" value="EFG_V-like"/>
</dbReference>
<dbReference type="InterPro" id="IPR004161">
    <property type="entry name" value="EFTu-like_2"/>
</dbReference>
<dbReference type="InterPro" id="IPR031157">
    <property type="entry name" value="G_TR_CS"/>
</dbReference>
<dbReference type="InterPro" id="IPR027417">
    <property type="entry name" value="P-loop_NTPase"/>
</dbReference>
<dbReference type="InterPro" id="IPR005225">
    <property type="entry name" value="Small_GTP-bd"/>
</dbReference>
<dbReference type="InterPro" id="IPR000795">
    <property type="entry name" value="T_Tr_GTP-bd_dom"/>
</dbReference>
<dbReference type="InterPro" id="IPR009000">
    <property type="entry name" value="Transl_B-barrel_sf"/>
</dbReference>
<dbReference type="NCBIfam" id="TIGR00231">
    <property type="entry name" value="small_GTP"/>
    <property type="match status" value="1"/>
</dbReference>
<dbReference type="PANTHER" id="PTHR43261:SF1">
    <property type="entry name" value="RIBOSOME-RELEASING FACTOR 2, MITOCHONDRIAL"/>
    <property type="match status" value="1"/>
</dbReference>
<dbReference type="PANTHER" id="PTHR43261">
    <property type="entry name" value="TRANSLATION ELONGATION FACTOR G-RELATED"/>
    <property type="match status" value="1"/>
</dbReference>
<dbReference type="Pfam" id="PF00679">
    <property type="entry name" value="EFG_C"/>
    <property type="match status" value="1"/>
</dbReference>
<dbReference type="Pfam" id="PF14492">
    <property type="entry name" value="EFG_III"/>
    <property type="match status" value="1"/>
</dbReference>
<dbReference type="Pfam" id="PF00009">
    <property type="entry name" value="GTP_EFTU"/>
    <property type="match status" value="1"/>
</dbReference>
<dbReference type="Pfam" id="PF03144">
    <property type="entry name" value="GTP_EFTU_D2"/>
    <property type="match status" value="1"/>
</dbReference>
<dbReference type="PRINTS" id="PR00315">
    <property type="entry name" value="ELONGATNFCT"/>
</dbReference>
<dbReference type="SMART" id="SM00838">
    <property type="entry name" value="EFG_C"/>
    <property type="match status" value="1"/>
</dbReference>
<dbReference type="SUPFAM" id="SSF54980">
    <property type="entry name" value="EF-G C-terminal domain-like"/>
    <property type="match status" value="2"/>
</dbReference>
<dbReference type="SUPFAM" id="SSF52540">
    <property type="entry name" value="P-loop containing nucleoside triphosphate hydrolases"/>
    <property type="match status" value="1"/>
</dbReference>
<dbReference type="SUPFAM" id="SSF50447">
    <property type="entry name" value="Translation proteins"/>
    <property type="match status" value="1"/>
</dbReference>
<dbReference type="PROSITE" id="PS00301">
    <property type="entry name" value="G_TR_1"/>
    <property type="match status" value="1"/>
</dbReference>
<dbReference type="PROSITE" id="PS51722">
    <property type="entry name" value="G_TR_2"/>
    <property type="match status" value="1"/>
</dbReference>